<accession>P04383</accession>
<keyword id="KW-0002">3D-structure</keyword>
<keyword id="KW-0106">Calcium</keyword>
<keyword id="KW-0167">Capsid protein</keyword>
<keyword id="KW-0694">RNA-binding</keyword>
<keyword id="KW-1142">T=3 icosahedral capsid protein</keyword>
<keyword id="KW-0946">Virion</keyword>
<proteinExistence type="evidence at protein level"/>
<protein>
    <recommendedName>
        <fullName>Capsid protein</fullName>
    </recommendedName>
    <alternativeName>
        <fullName>Coat protein</fullName>
    </alternativeName>
    <alternativeName>
        <fullName>p38</fullName>
    </alternativeName>
</protein>
<feature type="chain" id="PRO_0000222860" description="Capsid protein">
    <location>
        <begin position="1"/>
        <end position="348"/>
    </location>
</feature>
<feature type="region of interest" description="Disordered" evidence="2">
    <location>
        <begin position="59"/>
        <end position="86"/>
    </location>
</feature>
<feature type="region of interest" description="S domain, virion shell">
    <location>
        <begin position="82"/>
        <end position="239"/>
    </location>
</feature>
<feature type="region of interest" description="P domain, projecting">
    <location>
        <begin position="240"/>
        <end position="348"/>
    </location>
</feature>
<feature type="compositionally biased region" description="Polar residues" evidence="2">
    <location>
        <begin position="74"/>
        <end position="86"/>
    </location>
</feature>
<feature type="strand" evidence="4">
    <location>
        <begin position="84"/>
        <end position="95"/>
    </location>
</feature>
<feature type="strand" evidence="4">
    <location>
        <begin position="98"/>
        <end position="101"/>
    </location>
</feature>
<feature type="strand" evidence="4">
    <location>
        <begin position="103"/>
        <end position="109"/>
    </location>
</feature>
<feature type="turn" evidence="4">
    <location>
        <begin position="114"/>
        <end position="116"/>
    </location>
</feature>
<feature type="helix" evidence="4">
    <location>
        <begin position="118"/>
        <end position="124"/>
    </location>
</feature>
<feature type="strand" evidence="4">
    <location>
        <begin position="127"/>
        <end position="141"/>
    </location>
</feature>
<feature type="strand" evidence="4">
    <location>
        <begin position="150"/>
        <end position="157"/>
    </location>
</feature>
<feature type="helix" evidence="4">
    <location>
        <begin position="167"/>
        <end position="171"/>
    </location>
</feature>
<feature type="strand" evidence="4">
    <location>
        <begin position="173"/>
        <end position="180"/>
    </location>
</feature>
<feature type="strand" evidence="4">
    <location>
        <begin position="185"/>
        <end position="189"/>
    </location>
</feature>
<feature type="helix" evidence="4">
    <location>
        <begin position="206"/>
        <end position="209"/>
    </location>
</feature>
<feature type="strand" evidence="4">
    <location>
        <begin position="212"/>
        <end position="219"/>
    </location>
</feature>
<feature type="strand" evidence="4">
    <location>
        <begin position="221"/>
        <end position="225"/>
    </location>
</feature>
<feature type="strand" evidence="4">
    <location>
        <begin position="227"/>
        <end position="242"/>
    </location>
</feature>
<feature type="strand" evidence="4">
    <location>
        <begin position="249"/>
        <end position="251"/>
    </location>
</feature>
<feature type="helix" evidence="4">
    <location>
        <begin position="255"/>
        <end position="257"/>
    </location>
</feature>
<feature type="strand" evidence="4">
    <location>
        <begin position="263"/>
        <end position="268"/>
    </location>
</feature>
<feature type="strand" evidence="4">
    <location>
        <begin position="271"/>
        <end position="276"/>
    </location>
</feature>
<feature type="strand" evidence="4">
    <location>
        <begin position="278"/>
        <end position="287"/>
    </location>
</feature>
<feature type="strand" evidence="4">
    <location>
        <begin position="289"/>
        <end position="294"/>
    </location>
</feature>
<feature type="strand" evidence="4">
    <location>
        <begin position="298"/>
        <end position="301"/>
    </location>
</feature>
<feature type="strand" evidence="4">
    <location>
        <begin position="304"/>
        <end position="311"/>
    </location>
</feature>
<feature type="turn" evidence="4">
    <location>
        <begin position="312"/>
        <end position="315"/>
    </location>
</feature>
<feature type="strand" evidence="4">
    <location>
        <begin position="316"/>
        <end position="325"/>
    </location>
</feature>
<feature type="strand" evidence="4">
    <location>
        <begin position="328"/>
        <end position="334"/>
    </location>
</feature>
<feature type="strand" evidence="4">
    <location>
        <begin position="342"/>
        <end position="347"/>
    </location>
</feature>
<sequence>MENKGEKIAMNPTVQTLAQKGDKLAVKLVTRGWASLSTNQKRRAEMLAGYTPAILAFTPRRPRMTNPPPRTSRNSPGQAGKSMTMSKTELLSTVKGTTGVIPSFEDWVVSPRNVAVFPQLSLLATNFNKYRITALTVKYSPACSFETNGRVALGFNDDASDTPPTTKVGFYDLGKHVETAAQTAKDLVIPVDGKTRFIRDSASDDAKLVDFGRIVLSTYGFDKADTVVGELFIQYTIVLSDPTKTAKISQASNDKVSDGPTYVVPSVNGNELQLRVVAAGKWCIIVRGTVEGGFTKPTLIGPGISGDVDYESARPIAVCELVTQMEGQILKITKTSAEQPLQWVVYRM</sequence>
<dbReference type="EMBL" id="X02986">
    <property type="protein sequence ID" value="CAA26728.1"/>
    <property type="molecule type" value="Genomic_RNA"/>
</dbReference>
<dbReference type="PIR" id="A04209">
    <property type="entry name" value="VCVECV"/>
</dbReference>
<dbReference type="RefSeq" id="YP_009032648.1">
    <property type="nucleotide sequence ID" value="NC_001265.2"/>
</dbReference>
<dbReference type="PDB" id="1OPO">
    <property type="method" value="X-ray"/>
    <property type="resolution" value="3.20 A"/>
    <property type="chains" value="A/B/C=1-348"/>
</dbReference>
<dbReference type="PDBsum" id="1OPO"/>
<dbReference type="SMR" id="P04383"/>
<dbReference type="KEGG" id="vg:19493256"/>
<dbReference type="OrthoDB" id="17533at10239"/>
<dbReference type="EvolutionaryTrace" id="P04383"/>
<dbReference type="Proteomes" id="UP000201784">
    <property type="component" value="Genome"/>
</dbReference>
<dbReference type="GO" id="GO:0039617">
    <property type="term" value="C:T=3 icosahedral viral capsid"/>
    <property type="evidence" value="ECO:0007669"/>
    <property type="project" value="UniProtKB-KW"/>
</dbReference>
<dbReference type="GO" id="GO:0003723">
    <property type="term" value="F:RNA binding"/>
    <property type="evidence" value="ECO:0007669"/>
    <property type="project" value="UniProtKB-KW"/>
</dbReference>
<dbReference type="GO" id="GO:0005198">
    <property type="term" value="F:structural molecule activity"/>
    <property type="evidence" value="ECO:0007669"/>
    <property type="project" value="InterPro"/>
</dbReference>
<dbReference type="DisProt" id="DP02071"/>
<dbReference type="Gene3D" id="2.60.120.20">
    <property type="match status" value="1"/>
</dbReference>
<dbReference type="Gene3D" id="2.60.40.1780">
    <property type="entry name" value="Carmovirus coat protein"/>
    <property type="match status" value="1"/>
</dbReference>
<dbReference type="InterPro" id="IPR000937">
    <property type="entry name" value="Capsid_prot_S-dom_vir"/>
</dbReference>
<dbReference type="InterPro" id="IPR013669">
    <property type="entry name" value="Coat_prot_C_Carmovir"/>
</dbReference>
<dbReference type="InterPro" id="IPR029053">
    <property type="entry name" value="Viral_coat"/>
</dbReference>
<dbReference type="Pfam" id="PF08462">
    <property type="entry name" value="Carmo_coat_C"/>
    <property type="match status" value="1"/>
</dbReference>
<dbReference type="Pfam" id="PF00729">
    <property type="entry name" value="Viral_coat"/>
    <property type="match status" value="1"/>
</dbReference>
<dbReference type="PRINTS" id="PR00233">
    <property type="entry name" value="ICOSAHEDRAL"/>
</dbReference>
<dbReference type="SUPFAM" id="SSF88633">
    <property type="entry name" value="Positive stranded ssRNA viruses"/>
    <property type="match status" value="1"/>
</dbReference>
<dbReference type="PROSITE" id="PS00555">
    <property type="entry name" value="ICOSAH_VIR_COAT_S"/>
    <property type="match status" value="1"/>
</dbReference>
<organism>
    <name type="scientific">Carnation mottle virus</name>
    <name type="common">CarMV</name>
    <dbReference type="NCBI Taxonomy" id="11986"/>
    <lineage>
        <taxon>Viruses</taxon>
        <taxon>Riboviria</taxon>
        <taxon>Orthornavirae</taxon>
        <taxon>Kitrinoviricota</taxon>
        <taxon>Tolucaviricetes</taxon>
        <taxon>Tolivirales</taxon>
        <taxon>Tombusviridae</taxon>
        <taxon>Procedovirinae</taxon>
        <taxon>Alphacarmovirus</taxon>
        <taxon>Alphacarmovirus dianthi</taxon>
    </lineage>
</organism>
<comment type="function">
    <text evidence="1">Capsid protein self-assembles to form an icosahedral capsid with a T=3 symmetry, about 32-35 nm in diameter, and consisting of 180 capsid proteins. Also acts as a suppressor of RNA-mediated gene silencing, also known as post-transcriptional gene silencing (PTGS), a mechanism of plant viral defense that limits the accumulation of viral RNAs (By similarity).</text>
</comment>
<comment type="cofactor">
    <cofactor evidence="1">
        <name>Ca(2+)</name>
        <dbReference type="ChEBI" id="CHEBI:29108"/>
    </cofactor>
    <text evidence="1">Binds Ca(2+). Ca(2+) probably promotes virus assembly and stabilize the virus particle.</text>
</comment>
<comment type="subunit">
    <text evidence="1">Homodimer. Homomultimer.</text>
</comment>
<comment type="subcellular location">
    <subcellularLocation>
        <location evidence="1">Virion</location>
    </subcellularLocation>
</comment>
<comment type="similarity">
    <text evidence="3">Belongs to the icosahedral plant coat protein family.</text>
</comment>
<comment type="online information" name="Virus Particle ExploreR db">
    <link uri="https://viperdb.org/Info_Page.php?VDB=1opo"/>
    <text>Icosahedral capsid structure</text>
</comment>
<name>CAPSD_CARMV</name>
<gene>
    <name type="ORF">ORF4</name>
</gene>
<organismHost>
    <name type="scientific">Begonia</name>
    <dbReference type="NCBI Taxonomy" id="3681"/>
</organismHost>
<organismHost>
    <name type="scientific">Dianthus barbatus</name>
    <dbReference type="NCBI Taxonomy" id="278075"/>
</organismHost>
<organismHost>
    <name type="scientific">Dianthus caryophyllus</name>
    <name type="common">Carnation</name>
    <name type="synonym">Clove pink</name>
    <dbReference type="NCBI Taxonomy" id="3570"/>
</organismHost>
<organismHost>
    <name type="scientific">Dianthus chinensis</name>
    <dbReference type="NCBI Taxonomy" id="118431"/>
</organismHost>
<organismHost>
    <name type="scientific">Dianthus superbus</name>
    <dbReference type="NCBI Taxonomy" id="288950"/>
</organismHost>
<organismHost>
    <name type="scientific">Malus domestica</name>
    <name type="common">Apple</name>
    <name type="synonym">Pyrus malus</name>
    <dbReference type="NCBI Taxonomy" id="3750"/>
</organismHost>
<organismHost>
    <name type="scientific">Saponaria officinalis</name>
    <name type="common">Common soapwort</name>
    <name type="synonym">Lychnis saponaria</name>
    <dbReference type="NCBI Taxonomy" id="3572"/>
</organismHost>
<reference key="1">
    <citation type="journal article" date="1985" name="Nucleic Acids Res.">
        <title>Nucleotide sequence and genome organization of carnation mottle virus RNA.</title>
        <authorList>
            <person name="Guilley H."/>
            <person name="Carrington J.C."/>
            <person name="Balazs E."/>
            <person name="Jonard G."/>
            <person name="Richards K."/>
            <person name="Morris T.J."/>
        </authorList>
    </citation>
    <scope>NUCLEOTIDE SEQUENCE [GENOMIC RNA]</scope>
</reference>
<reference key="2">
    <citation type="journal article" date="1994" name="FEBS Lett.">
        <title>The atomic structure of Carnation mottle virus capsid protein.</title>
        <authorList>
            <person name="Morgunova E.Y."/>
            <person name="Dauter Z."/>
            <person name="Stuart D.I."/>
            <person name="Stel'Mashchuk V.Y."/>
            <person name="Mikhailov A.M."/>
            <person name="Wilson K.S."/>
            <person name="Vainshtein B.K."/>
        </authorList>
    </citation>
    <scope>X-RAY CRYSTALLOGRAPHY (3.2 ANGSTROMS)</scope>
</reference>
<evidence type="ECO:0000250" key="1"/>
<evidence type="ECO:0000256" key="2">
    <source>
        <dbReference type="SAM" id="MobiDB-lite"/>
    </source>
</evidence>
<evidence type="ECO:0000305" key="3"/>
<evidence type="ECO:0007829" key="4">
    <source>
        <dbReference type="PDB" id="1OPO"/>
    </source>
</evidence>